<organism>
    <name type="scientific">Campylobacter jejuni subsp. jejuni serotype O:6 (strain 81116 / NCTC 11828)</name>
    <dbReference type="NCBI Taxonomy" id="407148"/>
    <lineage>
        <taxon>Bacteria</taxon>
        <taxon>Pseudomonadati</taxon>
        <taxon>Campylobacterota</taxon>
        <taxon>Epsilonproteobacteria</taxon>
        <taxon>Campylobacterales</taxon>
        <taxon>Campylobacteraceae</taxon>
        <taxon>Campylobacter</taxon>
    </lineage>
</organism>
<proteinExistence type="inferred from homology"/>
<feature type="chain" id="PRO_1000072941" description="Histidine biosynthesis bifunctional protein HisB">
    <location>
        <begin position="1"/>
        <end position="352"/>
    </location>
</feature>
<feature type="region of interest" description="Histidinol-phosphatase" evidence="1">
    <location>
        <begin position="1"/>
        <end position="164"/>
    </location>
</feature>
<feature type="region of interest" description="Imidazoleglycerol-phosphate dehydratase" evidence="1">
    <location>
        <begin position="165"/>
        <end position="352"/>
    </location>
</feature>
<feature type="active site" description="Nucleophile" evidence="1">
    <location>
        <position position="9"/>
    </location>
</feature>
<feature type="active site" description="Proton donor" evidence="1">
    <location>
        <position position="11"/>
    </location>
</feature>
<feature type="binding site" evidence="1">
    <location>
        <position position="9"/>
    </location>
    <ligand>
        <name>Mg(2+)</name>
        <dbReference type="ChEBI" id="CHEBI:18420"/>
    </ligand>
</feature>
<feature type="binding site" evidence="1">
    <location>
        <position position="11"/>
    </location>
    <ligand>
        <name>Mg(2+)</name>
        <dbReference type="ChEBI" id="CHEBI:18420"/>
    </ligand>
</feature>
<feature type="binding site" evidence="1">
    <location>
        <position position="93"/>
    </location>
    <ligand>
        <name>Zn(2+)</name>
        <dbReference type="ChEBI" id="CHEBI:29105"/>
    </ligand>
</feature>
<feature type="binding site" evidence="1">
    <location>
        <position position="95"/>
    </location>
    <ligand>
        <name>Zn(2+)</name>
        <dbReference type="ChEBI" id="CHEBI:29105"/>
    </ligand>
</feature>
<feature type="binding site" evidence="1">
    <location>
        <position position="101"/>
    </location>
    <ligand>
        <name>Zn(2+)</name>
        <dbReference type="ChEBI" id="CHEBI:29105"/>
    </ligand>
</feature>
<feature type="binding site" evidence="1">
    <location>
        <position position="103"/>
    </location>
    <ligand>
        <name>Zn(2+)</name>
        <dbReference type="ChEBI" id="CHEBI:29105"/>
    </ligand>
</feature>
<feature type="binding site" evidence="1">
    <location>
        <position position="130"/>
    </location>
    <ligand>
        <name>Mg(2+)</name>
        <dbReference type="ChEBI" id="CHEBI:18420"/>
    </ligand>
</feature>
<protein>
    <recommendedName>
        <fullName evidence="1">Histidine biosynthesis bifunctional protein HisB</fullName>
    </recommendedName>
    <domain>
        <recommendedName>
            <fullName evidence="1">Histidinol-phosphatase</fullName>
            <ecNumber evidence="1">3.1.3.15</ecNumber>
        </recommendedName>
    </domain>
    <domain>
        <recommendedName>
            <fullName evidence="1">Imidazoleglycerol-phosphate dehydratase</fullName>
            <shortName evidence="1">IGPD</shortName>
            <ecNumber evidence="1">4.2.1.19</ecNumber>
        </recommendedName>
    </domain>
</protein>
<name>HIS7_CAMJ8</name>
<dbReference type="EC" id="3.1.3.15" evidence="1"/>
<dbReference type="EC" id="4.2.1.19" evidence="1"/>
<dbReference type="EMBL" id="CP000814">
    <property type="protein sequence ID" value="ABV53098.1"/>
    <property type="molecule type" value="Genomic_DNA"/>
</dbReference>
<dbReference type="RefSeq" id="WP_002866579.1">
    <property type="nucleotide sequence ID" value="NC_009839.1"/>
</dbReference>
<dbReference type="SMR" id="A8FNR1"/>
<dbReference type="KEGG" id="cju:C8J_1501"/>
<dbReference type="HOGENOM" id="CLU_044308_0_0_7"/>
<dbReference type="UniPathway" id="UPA00031">
    <property type="reaction ID" value="UER00011"/>
</dbReference>
<dbReference type="UniPathway" id="UPA00031">
    <property type="reaction ID" value="UER00013"/>
</dbReference>
<dbReference type="GO" id="GO:0005737">
    <property type="term" value="C:cytoplasm"/>
    <property type="evidence" value="ECO:0007669"/>
    <property type="project" value="UniProtKB-SubCell"/>
</dbReference>
<dbReference type="GO" id="GO:0004401">
    <property type="term" value="F:histidinol-phosphatase activity"/>
    <property type="evidence" value="ECO:0007669"/>
    <property type="project" value="UniProtKB-UniRule"/>
</dbReference>
<dbReference type="GO" id="GO:0004424">
    <property type="term" value="F:imidazoleglycerol-phosphate dehydratase activity"/>
    <property type="evidence" value="ECO:0007669"/>
    <property type="project" value="UniProtKB-UniRule"/>
</dbReference>
<dbReference type="GO" id="GO:0046872">
    <property type="term" value="F:metal ion binding"/>
    <property type="evidence" value="ECO:0007669"/>
    <property type="project" value="UniProtKB-KW"/>
</dbReference>
<dbReference type="GO" id="GO:0000105">
    <property type="term" value="P:L-histidine biosynthetic process"/>
    <property type="evidence" value="ECO:0007669"/>
    <property type="project" value="UniProtKB-UniRule"/>
</dbReference>
<dbReference type="CDD" id="cd07503">
    <property type="entry name" value="HAD_HisB-N"/>
    <property type="match status" value="1"/>
</dbReference>
<dbReference type="CDD" id="cd07914">
    <property type="entry name" value="IGPD"/>
    <property type="match status" value="1"/>
</dbReference>
<dbReference type="FunFam" id="3.40.50.1000:FF:000061">
    <property type="entry name" value="Histidine biosynthesis bifunctional protein HisB"/>
    <property type="match status" value="1"/>
</dbReference>
<dbReference type="FunFam" id="3.30.230.40:FF:000001">
    <property type="entry name" value="Imidazoleglycerol-phosphate dehydratase HisB"/>
    <property type="match status" value="1"/>
</dbReference>
<dbReference type="FunFam" id="3.30.230.40:FF:000003">
    <property type="entry name" value="Imidazoleglycerol-phosphate dehydratase HisB"/>
    <property type="match status" value="1"/>
</dbReference>
<dbReference type="Gene3D" id="3.40.50.1000">
    <property type="entry name" value="HAD superfamily/HAD-like"/>
    <property type="match status" value="1"/>
</dbReference>
<dbReference type="Gene3D" id="3.30.230.40">
    <property type="entry name" value="Imidazole glycerol phosphate dehydratase, domain 1"/>
    <property type="match status" value="2"/>
</dbReference>
<dbReference type="HAMAP" id="MF_01022">
    <property type="entry name" value="Bifunc_HisB"/>
    <property type="match status" value="1"/>
</dbReference>
<dbReference type="HAMAP" id="MF_00076">
    <property type="entry name" value="HisB"/>
    <property type="match status" value="1"/>
</dbReference>
<dbReference type="InterPro" id="IPR036412">
    <property type="entry name" value="HAD-like_sf"/>
</dbReference>
<dbReference type="InterPro" id="IPR006549">
    <property type="entry name" value="HAD-SF_hydro_IIIA"/>
</dbReference>
<dbReference type="InterPro" id="IPR023214">
    <property type="entry name" value="HAD_sf"/>
</dbReference>
<dbReference type="InterPro" id="IPR020566">
    <property type="entry name" value="His_synth_bifunc_HisB"/>
</dbReference>
<dbReference type="InterPro" id="IPR005954">
    <property type="entry name" value="HisB_N"/>
</dbReference>
<dbReference type="InterPro" id="IPR006543">
    <property type="entry name" value="Histidinol-phos"/>
</dbReference>
<dbReference type="InterPro" id="IPR038494">
    <property type="entry name" value="IGPD_sf"/>
</dbReference>
<dbReference type="InterPro" id="IPR000807">
    <property type="entry name" value="ImidazoleglycerolP_deHydtase"/>
</dbReference>
<dbReference type="InterPro" id="IPR020565">
    <property type="entry name" value="ImidazoleglycerP_deHydtase_CS"/>
</dbReference>
<dbReference type="InterPro" id="IPR013954">
    <property type="entry name" value="PNK3P"/>
</dbReference>
<dbReference type="InterPro" id="IPR020568">
    <property type="entry name" value="Ribosomal_Su5_D2-typ_SF"/>
</dbReference>
<dbReference type="NCBIfam" id="TIGR01662">
    <property type="entry name" value="HAD-SF-IIIA"/>
    <property type="match status" value="1"/>
</dbReference>
<dbReference type="NCBIfam" id="TIGR01261">
    <property type="entry name" value="hisB_Nterm"/>
    <property type="match status" value="1"/>
</dbReference>
<dbReference type="NCBIfam" id="TIGR01656">
    <property type="entry name" value="Histidinol-ppas"/>
    <property type="match status" value="1"/>
</dbReference>
<dbReference type="NCBIfam" id="NF002111">
    <property type="entry name" value="PRK00951.2-1"/>
    <property type="match status" value="1"/>
</dbReference>
<dbReference type="NCBIfam" id="NF003937">
    <property type="entry name" value="PRK05446.1"/>
    <property type="match status" value="1"/>
</dbReference>
<dbReference type="PANTHER" id="PTHR23133:SF2">
    <property type="entry name" value="IMIDAZOLEGLYCEROL-PHOSPHATE DEHYDRATASE"/>
    <property type="match status" value="1"/>
</dbReference>
<dbReference type="PANTHER" id="PTHR23133">
    <property type="entry name" value="IMIDAZOLEGLYCEROL-PHOSPHATE DEHYDRATASE HIS7"/>
    <property type="match status" value="1"/>
</dbReference>
<dbReference type="Pfam" id="PF00475">
    <property type="entry name" value="IGPD"/>
    <property type="match status" value="1"/>
</dbReference>
<dbReference type="Pfam" id="PF08645">
    <property type="entry name" value="PNK3P"/>
    <property type="match status" value="1"/>
</dbReference>
<dbReference type="SUPFAM" id="SSF56784">
    <property type="entry name" value="HAD-like"/>
    <property type="match status" value="1"/>
</dbReference>
<dbReference type="SUPFAM" id="SSF54211">
    <property type="entry name" value="Ribosomal protein S5 domain 2-like"/>
    <property type="match status" value="2"/>
</dbReference>
<dbReference type="PROSITE" id="PS00954">
    <property type="entry name" value="IGP_DEHYDRATASE_1"/>
    <property type="match status" value="1"/>
</dbReference>
<dbReference type="PROSITE" id="PS00955">
    <property type="entry name" value="IGP_DEHYDRATASE_2"/>
    <property type="match status" value="1"/>
</dbReference>
<comment type="catalytic activity">
    <reaction evidence="1">
        <text>D-erythro-1-(imidazol-4-yl)glycerol 3-phosphate = 3-(imidazol-4-yl)-2-oxopropyl phosphate + H2O</text>
        <dbReference type="Rhea" id="RHEA:11040"/>
        <dbReference type="ChEBI" id="CHEBI:15377"/>
        <dbReference type="ChEBI" id="CHEBI:57766"/>
        <dbReference type="ChEBI" id="CHEBI:58278"/>
        <dbReference type="EC" id="4.2.1.19"/>
    </reaction>
</comment>
<comment type="catalytic activity">
    <reaction evidence="1">
        <text>L-histidinol phosphate + H2O = L-histidinol + phosphate</text>
        <dbReference type="Rhea" id="RHEA:14465"/>
        <dbReference type="ChEBI" id="CHEBI:15377"/>
        <dbReference type="ChEBI" id="CHEBI:43474"/>
        <dbReference type="ChEBI" id="CHEBI:57699"/>
        <dbReference type="ChEBI" id="CHEBI:57980"/>
        <dbReference type="EC" id="3.1.3.15"/>
    </reaction>
</comment>
<comment type="cofactor">
    <cofactor evidence="1">
        <name>Mg(2+)</name>
        <dbReference type="ChEBI" id="CHEBI:18420"/>
    </cofactor>
</comment>
<comment type="cofactor">
    <cofactor evidence="1">
        <name>Zn(2+)</name>
        <dbReference type="ChEBI" id="CHEBI:29105"/>
    </cofactor>
</comment>
<comment type="pathway">
    <text evidence="1">Amino-acid biosynthesis; L-histidine biosynthesis; L-histidine from 5-phospho-alpha-D-ribose 1-diphosphate: step 6/9.</text>
</comment>
<comment type="pathway">
    <text evidence="1">Amino-acid biosynthesis; L-histidine biosynthesis; L-histidine from 5-phospho-alpha-D-ribose 1-diphosphate: step 8/9.</text>
</comment>
<comment type="subcellular location">
    <subcellularLocation>
        <location evidence="1">Cytoplasm</location>
    </subcellularLocation>
</comment>
<comment type="similarity">
    <text evidence="1">In the N-terminal section; belongs to the histidinol-phosphatase family.</text>
</comment>
<comment type="similarity">
    <text evidence="1">In the C-terminal section; belongs to the imidazoleglycerol-phosphate dehydratase family.</text>
</comment>
<gene>
    <name evidence="1" type="primary">hisB</name>
    <name type="ordered locus">C8J_1501</name>
</gene>
<reference key="1">
    <citation type="journal article" date="2007" name="J. Bacteriol.">
        <title>The complete genome sequence of Campylobacter jejuni strain 81116 (NCTC11828).</title>
        <authorList>
            <person name="Pearson B.M."/>
            <person name="Gaskin D.J.H."/>
            <person name="Segers R.P.A.M."/>
            <person name="Wells J.M."/>
            <person name="Nuijten P.J.M."/>
            <person name="van Vliet A.H.M."/>
        </authorList>
    </citation>
    <scope>NUCLEOTIDE SEQUENCE [LARGE SCALE GENOMIC DNA]</scope>
    <source>
        <strain>81116 / NCTC 11828</strain>
    </source>
</reference>
<evidence type="ECO:0000255" key="1">
    <source>
        <dbReference type="HAMAP-Rule" id="MF_01022"/>
    </source>
</evidence>
<accession>A8FNR1</accession>
<sequence length="352" mass="39608">MSQKILFIDRDGTLIEEPKSDFQIDTLEKLRFEKDAIPTLLKLKNFGFKFIMVSNQDGLGTPSFPKENFEIAHEKMLDILKSCGIEFQDIFICPHFENENCACRKPKTAMLEEYIKHELYDKEQSFVIGDRESDMILASNLGVRGLRYGELSWKEIENEILSSFRSASYQRTTKETDIKVKVCLNGGKVSIKTGIDFFDHMLEQIAVHGGIGLEISCKGDLEIDEHHSVEDVALALGACIKKALGDKIGIARYGFALPMDECLASCAMDFCNRPHLVYKAKFKKSHLGALSTEMIEHFFYSLSYAMGVSLHLKVKGKNDHHKAEGLFKAFAKALKMAVKIESENLASSKGVI</sequence>
<keyword id="KW-0028">Amino-acid biosynthesis</keyword>
<keyword id="KW-0963">Cytoplasm</keyword>
<keyword id="KW-0368">Histidine biosynthesis</keyword>
<keyword id="KW-0378">Hydrolase</keyword>
<keyword id="KW-0456">Lyase</keyword>
<keyword id="KW-0460">Magnesium</keyword>
<keyword id="KW-0479">Metal-binding</keyword>
<keyword id="KW-0511">Multifunctional enzyme</keyword>
<keyword id="KW-0862">Zinc</keyword>